<name>Y921_STRR6</name>
<sequence>MPFVRIDLFEGRTLEQKKALAKEVTEAVVRNTGAPQSAVHVIINDMPEGTYFPQGEMRTK</sequence>
<evidence type="ECO:0000250" key="1"/>
<evidence type="ECO:0000305" key="2"/>
<reference key="1">
    <citation type="journal article" date="2001" name="J. Bacteriol.">
        <title>Genome of the bacterium Streptococcus pneumoniae strain R6.</title>
        <authorList>
            <person name="Hoskins J."/>
            <person name="Alborn W.E. Jr."/>
            <person name="Arnold J."/>
            <person name="Blaszczak L.C."/>
            <person name="Burgett S."/>
            <person name="DeHoff B.S."/>
            <person name="Estrem S.T."/>
            <person name="Fritz L."/>
            <person name="Fu D.-J."/>
            <person name="Fuller W."/>
            <person name="Geringer C."/>
            <person name="Gilmour R."/>
            <person name="Glass J.S."/>
            <person name="Khoja H."/>
            <person name="Kraft A.R."/>
            <person name="Lagace R.E."/>
            <person name="LeBlanc D.J."/>
            <person name="Lee L.N."/>
            <person name="Lefkowitz E.J."/>
            <person name="Lu J."/>
            <person name="Matsushima P."/>
            <person name="McAhren S.M."/>
            <person name="McHenney M."/>
            <person name="McLeaster K."/>
            <person name="Mundy C.W."/>
            <person name="Nicas T.I."/>
            <person name="Norris F.H."/>
            <person name="O'Gara M."/>
            <person name="Peery R.B."/>
            <person name="Robertson G.T."/>
            <person name="Rockey P."/>
            <person name="Sun P.-M."/>
            <person name="Winkler M.E."/>
            <person name="Yang Y."/>
            <person name="Young-Bellido M."/>
            <person name="Zhao G."/>
            <person name="Zook C.A."/>
            <person name="Baltz R.H."/>
            <person name="Jaskunas S.R."/>
            <person name="Rosteck P.R. Jr."/>
            <person name="Skatrud P.L."/>
            <person name="Glass J.I."/>
        </authorList>
    </citation>
    <scope>NUCLEOTIDE SEQUENCE [LARGE SCALE GENOMIC DNA]</scope>
    <source>
        <strain>ATCC BAA-255 / R6</strain>
    </source>
</reference>
<protein>
    <recommendedName>
        <fullName>Probable tautomerase spr0921</fullName>
        <ecNumber>5.3.2.-</ecNumber>
    </recommendedName>
</protein>
<dbReference type="EC" id="5.3.2.-"/>
<dbReference type="EMBL" id="AE007317">
    <property type="protein sequence ID" value="AAK99725.1"/>
    <property type="molecule type" value="Genomic_DNA"/>
</dbReference>
<dbReference type="PIR" id="A97987">
    <property type="entry name" value="A97987"/>
</dbReference>
<dbReference type="RefSeq" id="NP_358515.1">
    <property type="nucleotide sequence ID" value="NC_003098.1"/>
</dbReference>
<dbReference type="RefSeq" id="WP_001117401.1">
    <property type="nucleotide sequence ID" value="NC_003098.1"/>
</dbReference>
<dbReference type="SMR" id="P67531"/>
<dbReference type="STRING" id="171101.spr0921"/>
<dbReference type="KEGG" id="spr:spr0921"/>
<dbReference type="PATRIC" id="fig|171101.6.peg.1008"/>
<dbReference type="eggNOG" id="COG1942">
    <property type="taxonomic scope" value="Bacteria"/>
</dbReference>
<dbReference type="HOGENOM" id="CLU_148073_5_1_9"/>
<dbReference type="PRO" id="PR:P67531"/>
<dbReference type="Proteomes" id="UP000000586">
    <property type="component" value="Chromosome"/>
</dbReference>
<dbReference type="GO" id="GO:0016853">
    <property type="term" value="F:isomerase activity"/>
    <property type="evidence" value="ECO:0000318"/>
    <property type="project" value="GO_Central"/>
</dbReference>
<dbReference type="Gene3D" id="3.30.429.10">
    <property type="entry name" value="Macrophage Migration Inhibitory Factor"/>
    <property type="match status" value="1"/>
</dbReference>
<dbReference type="InterPro" id="IPR004370">
    <property type="entry name" value="4-OT-like_dom"/>
</dbReference>
<dbReference type="InterPro" id="IPR014347">
    <property type="entry name" value="Tautomerase/MIF_sf"/>
</dbReference>
<dbReference type="NCBIfam" id="NF002571">
    <property type="entry name" value="PRK02220.1"/>
    <property type="match status" value="1"/>
</dbReference>
<dbReference type="NCBIfam" id="NF002622">
    <property type="entry name" value="PRK02289.1"/>
    <property type="match status" value="1"/>
</dbReference>
<dbReference type="PANTHER" id="PTHR35530:SF1">
    <property type="entry name" value="2-HYDROXYMUCONATE TAUTOMERASE"/>
    <property type="match status" value="1"/>
</dbReference>
<dbReference type="PANTHER" id="PTHR35530">
    <property type="entry name" value="TAUTOMERASE-RELATED"/>
    <property type="match status" value="1"/>
</dbReference>
<dbReference type="Pfam" id="PF01361">
    <property type="entry name" value="Tautomerase"/>
    <property type="match status" value="1"/>
</dbReference>
<dbReference type="SUPFAM" id="SSF55331">
    <property type="entry name" value="Tautomerase/MIF"/>
    <property type="match status" value="1"/>
</dbReference>
<organism>
    <name type="scientific">Streptococcus pneumoniae (strain ATCC BAA-255 / R6)</name>
    <dbReference type="NCBI Taxonomy" id="171101"/>
    <lineage>
        <taxon>Bacteria</taxon>
        <taxon>Bacillati</taxon>
        <taxon>Bacillota</taxon>
        <taxon>Bacilli</taxon>
        <taxon>Lactobacillales</taxon>
        <taxon>Streptococcaceae</taxon>
        <taxon>Streptococcus</taxon>
    </lineage>
</organism>
<feature type="initiator methionine" description="Removed" evidence="1">
    <location>
        <position position="1"/>
    </location>
</feature>
<feature type="chain" id="PRO_0000209554" description="Probable tautomerase spr0921">
    <location>
        <begin position="2"/>
        <end position="60"/>
    </location>
</feature>
<feature type="active site" description="Proton acceptor; via imino nitrogen" evidence="1">
    <location>
        <position position="2"/>
    </location>
</feature>
<proteinExistence type="inferred from homology"/>
<accession>P67531</accession>
<accession>Q8DPZ7</accession>
<accession>Q97R23</accession>
<comment type="similarity">
    <text evidence="2">Belongs to the 4-oxalocrotonate tautomerase family.</text>
</comment>
<gene>
    <name type="ordered locus">spr0921</name>
</gene>
<keyword id="KW-0413">Isomerase</keyword>
<keyword id="KW-1185">Reference proteome</keyword>